<keyword id="KW-0002">3D-structure</keyword>
<keyword id="KW-0256">Endoplasmic reticulum</keyword>
<keyword id="KW-0472">Membrane</keyword>
<keyword id="KW-1185">Reference proteome</keyword>
<keyword id="KW-0812">Transmembrane</keyword>
<keyword id="KW-1133">Transmembrane helix</keyword>
<organism>
    <name type="scientific">Canis lupus familiaris</name>
    <name type="common">Dog</name>
    <name type="synonym">Canis familiaris</name>
    <dbReference type="NCBI Taxonomy" id="9615"/>
    <lineage>
        <taxon>Eukaryota</taxon>
        <taxon>Metazoa</taxon>
        <taxon>Chordata</taxon>
        <taxon>Craniata</taxon>
        <taxon>Vertebrata</taxon>
        <taxon>Euteleostomi</taxon>
        <taxon>Mammalia</taxon>
        <taxon>Eutheria</taxon>
        <taxon>Laurasiatheria</taxon>
        <taxon>Carnivora</taxon>
        <taxon>Caniformia</taxon>
        <taxon>Canidae</taxon>
        <taxon>Canis</taxon>
    </lineage>
</organism>
<accession>P86218</accession>
<dbReference type="EMBL" id="BF228912">
    <property type="status" value="NOT_ANNOTATED_CDS"/>
    <property type="molecule type" value="mRNA"/>
</dbReference>
<dbReference type="EMBL" id="DN368674">
    <property type="status" value="NOT_ANNOTATED_CDS"/>
    <property type="molecule type" value="mRNA"/>
</dbReference>
<dbReference type="RefSeq" id="NP_001153593.1">
    <property type="nucleotide sequence ID" value="NM_001160121.1"/>
</dbReference>
<dbReference type="PDB" id="6FTG">
    <property type="method" value="EM"/>
    <property type="resolution" value="9.10 A"/>
    <property type="chains" value="3=30-149"/>
</dbReference>
<dbReference type="PDB" id="6FTI">
    <property type="method" value="EM"/>
    <property type="resolution" value="4.20 A"/>
    <property type="chains" value="3=30-149"/>
</dbReference>
<dbReference type="PDB" id="6FTJ">
    <property type="method" value="EM"/>
    <property type="resolution" value="4.70 A"/>
    <property type="chains" value="3=30-149"/>
</dbReference>
<dbReference type="PDBsum" id="6FTG"/>
<dbReference type="PDBsum" id="6FTI"/>
<dbReference type="PDBsum" id="6FTJ"/>
<dbReference type="EMDB" id="EMD-4315"/>
<dbReference type="EMDB" id="EMD-4316"/>
<dbReference type="EMDB" id="EMD-4317"/>
<dbReference type="SMR" id="P86218"/>
<dbReference type="CORUM" id="P86218"/>
<dbReference type="FunCoup" id="P86218">
    <property type="interactions" value="700"/>
</dbReference>
<dbReference type="STRING" id="9615.ENSCAFP00000042288"/>
<dbReference type="PaxDb" id="9612-ENSCAFP00000042288"/>
<dbReference type="Ensembl" id="ENSCAFT00000024990.4">
    <property type="protein sequence ID" value="ENSCAFP00000057924.1"/>
    <property type="gene ID" value="ENSCAFG00000015773.4"/>
</dbReference>
<dbReference type="Ensembl" id="ENSCAFT00000046441.4">
    <property type="protein sequence ID" value="ENSCAFP00000042288.1"/>
    <property type="gene ID" value="ENSCAFG00000011286.6"/>
</dbReference>
<dbReference type="Ensembl" id="ENSCAFT00030045454.1">
    <property type="protein sequence ID" value="ENSCAFP00030039699.1"/>
    <property type="gene ID" value="ENSCAFG00030024696.1"/>
</dbReference>
<dbReference type="Ensembl" id="ENSCAFT00040040804.1">
    <property type="protein sequence ID" value="ENSCAFP00040035588.1"/>
    <property type="gene ID" value="ENSCAFG00040021980.1"/>
</dbReference>
<dbReference type="Ensembl" id="ENSCAFT00845008212.1">
    <property type="protein sequence ID" value="ENSCAFP00845006453.1"/>
    <property type="gene ID" value="ENSCAFG00845004592.1"/>
</dbReference>
<dbReference type="Ensembl" id="ENSCAFT00845052121.1">
    <property type="protein sequence ID" value="ENSCAFP00845040882.1"/>
    <property type="gene ID" value="ENSCAFG00845029437.1"/>
</dbReference>
<dbReference type="GeneID" id="477512"/>
<dbReference type="KEGG" id="cfa:100688081"/>
<dbReference type="KEGG" id="cfa:477512"/>
<dbReference type="CTD" id="58505"/>
<dbReference type="VEuPathDB" id="HostDB:ENSCAFG00845004592"/>
<dbReference type="VEuPathDB" id="HostDB:ENSCAFG00845029437"/>
<dbReference type="VGNC" id="VGNC:44170">
    <property type="gene designation" value="OSTC"/>
</dbReference>
<dbReference type="eggNOG" id="KOG3356">
    <property type="taxonomic scope" value="Eukaryota"/>
</dbReference>
<dbReference type="GeneTree" id="ENSGT00390000001376"/>
<dbReference type="HOGENOM" id="CLU_109136_1_0_1"/>
<dbReference type="InParanoid" id="P86218"/>
<dbReference type="OMA" id="CWIFMRM"/>
<dbReference type="OrthoDB" id="10256333at2759"/>
<dbReference type="TreeFam" id="TF323315"/>
<dbReference type="UniPathway" id="UPA00378"/>
<dbReference type="Proteomes" id="UP000002254">
    <property type="component" value="Chromosome 32"/>
</dbReference>
<dbReference type="Proteomes" id="UP000002254">
    <property type="component" value="Chromosome 7"/>
</dbReference>
<dbReference type="Proteomes" id="UP000694429">
    <property type="component" value="Chromosome 32"/>
</dbReference>
<dbReference type="Proteomes" id="UP000694542">
    <property type="component" value="Chromosome 32"/>
</dbReference>
<dbReference type="Proteomes" id="UP000805418">
    <property type="component" value="Chromosome 32"/>
</dbReference>
<dbReference type="Proteomes" id="UP000805418">
    <property type="component" value="Chromosome 7"/>
</dbReference>
<dbReference type="Bgee" id="ENSCAFG00000011286">
    <property type="expression patterns" value="Expressed in pancreas and 48 other cell types or tissues"/>
</dbReference>
<dbReference type="GO" id="GO:0008250">
    <property type="term" value="C:oligosaccharyltransferase complex"/>
    <property type="evidence" value="ECO:0000318"/>
    <property type="project" value="GO_Central"/>
</dbReference>
<dbReference type="GO" id="GO:0006486">
    <property type="term" value="P:protein glycosylation"/>
    <property type="evidence" value="ECO:0007669"/>
    <property type="project" value="UniProtKB-UniPathway"/>
</dbReference>
<dbReference type="InterPro" id="IPR021149">
    <property type="entry name" value="OligosaccharylTrfase_OST3/OST6"/>
</dbReference>
<dbReference type="InterPro" id="IPR042416">
    <property type="entry name" value="OSTC"/>
</dbReference>
<dbReference type="PANTHER" id="PTHR13160">
    <property type="entry name" value="OLIGOSACCHARYLTRANSFERASE COMPLEX SUBUNIT OSTC"/>
    <property type="match status" value="1"/>
</dbReference>
<dbReference type="PANTHER" id="PTHR13160:SF9">
    <property type="entry name" value="OLIGOSACCHARYLTRANSFERASE COMPLEX SUBUNIT OSTC"/>
    <property type="match status" value="1"/>
</dbReference>
<dbReference type="Pfam" id="PF04756">
    <property type="entry name" value="OST3_OST6"/>
    <property type="match status" value="1"/>
</dbReference>
<gene>
    <name evidence="1" type="primary">OSTC</name>
</gene>
<evidence type="ECO:0000250" key="1">
    <source>
        <dbReference type="UniProtKB" id="Q9NRP0"/>
    </source>
</evidence>
<evidence type="ECO:0000255" key="2"/>
<evidence type="ECO:0000269" key="3">
    <source>
    </source>
</evidence>
<evidence type="ECO:0000269" key="4">
    <source>
    </source>
</evidence>
<evidence type="ECO:0000269" key="5">
    <source>
    </source>
</evidence>
<evidence type="ECO:0000305" key="6"/>
<comment type="function">
    <text evidence="1">Subunit of STT3A-containing oligosaccharyl transferase (OST-A) complex that catalyzes the initial transfer of a defined glycan (Glc(3)Man(9)GlcNAc(2) in eukaryotes) from the lipid carrier dolichol-pyrophosphate to an asparagine residue within an Asn-X-Ser/Thr consensus motif in nascent polypeptide chains, the first step in protein N-glycosylation. N-glycosylation occurs cotranslationally and the complex associates with the Sec61 complex at the channel-forming translocon complex that mediates protein translocation across the endoplasmic reticulum (ER). Within the OST-A complex, acts as an adapter that anchors the OST-A complex to the Sec61 complex. May be involved in N-glycosylation of APP (amyloid-beta precursor protein). Can modulate gamma-secretase cleavage of APP by enhancing endoprotelysis of PSEN1.</text>
</comment>
<comment type="pathway">
    <text evidence="1">Protein modification; protein glycosylation.</text>
</comment>
<comment type="subunit">
    <text evidence="1 4 5">Component of STT3A-containing oligosaccharyl transferase (OST-A) complex (PubMed:15835887, PubMed:29519914). STT3A-containing complex assembly occurs through the formation of 3 subcomplexes (PubMed:15835887, PubMed:29519914). Subcomplex 1 contains RPN1 and TMEM258, subcomplex 2 contains the STT3A-specific subunits STT3A, DC2/OSTC, and KCP2 as well as the core subunit OST4, and subcomplex 3 contains RPN2, DAD1, and OST48 (PubMed:15835887, PubMed:29519914). The OST-A complex can form stable complexes with the Sec61 complex or with both the Sec61 and TRAP complexes (PubMed:15835887, PubMed:29519914). Interacts with PSEN1 and NCSTN; indicative for an association with the gamma-secretase complex (By similarity).</text>
</comment>
<comment type="subcellular location">
    <subcellularLocation>
        <location evidence="1">Endoplasmic reticulum</location>
    </subcellularLocation>
    <subcellularLocation>
        <location evidence="6">Membrane</location>
        <topology evidence="6">Multi-pass membrane protein</topology>
    </subcellularLocation>
</comment>
<comment type="similarity">
    <text evidence="2">Belongs to the OSTC family.</text>
</comment>
<name>OSTC_CANLF</name>
<reference evidence="6" key="1">
    <citation type="journal article" date="2003" name="J. Hered.">
        <title>A survey of canine expressed sequence tags and a display of their annotations through a flexible web-based interface.</title>
        <authorList>
            <person name="Palmer L.E."/>
            <person name="O'Shaughnessy A.L."/>
            <person name="Preston R.R."/>
            <person name="Santos L."/>
            <person name="Balija V.S."/>
            <person name="Nascimento L.U."/>
            <person name="Zutavern T.L."/>
            <person name="Henthorn P.S."/>
            <person name="Hannon G.J."/>
            <person name="McCombie W.R."/>
        </authorList>
    </citation>
    <scope>NUCLEOTIDE SEQUENCE [LARGE SCALE MRNA] OF 1-107</scope>
    <source>
        <strain evidence="3">Cocker spaniel</strain>
        <tissue evidence="3">Kidney</tissue>
    </source>
</reference>
<reference evidence="6" key="2">
    <citation type="submission" date="2005-03" db="EMBL/GenBank/DDBJ databases">
        <authorList>
            <person name="Staten N.R."/>
        </authorList>
    </citation>
    <scope>NUCLEOTIDE SEQUENCE [LARGE SCALE MRNA] OF 70-149</scope>
    <source>
        <strain>Beagle</strain>
        <tissue>Heart atrium</tissue>
    </source>
</reference>
<reference evidence="6" key="3">
    <citation type="journal article" date="2005" name="Biochemistry">
        <title>Proteomic analysis of mammalian oligosaccharyltransferase reveals multiple subcomplexes that contain Sec61, TRAP, and two potential new subunits.</title>
        <authorList>
            <person name="Shibatani T."/>
            <person name="David L.L."/>
            <person name="McCormack A.L."/>
            <person name="Frueh K."/>
            <person name="Skach W.R."/>
        </authorList>
    </citation>
    <scope>IDENTIFICATION IN THE OLIGOSACCHARYLTRANSFERASE COMPLEX</scope>
</reference>
<reference key="4">
    <citation type="journal article" date="2018" name="Science">
        <title>Structural basis for coupling protein transport and N-glycosylation at the mammalian endoplasmic reticulum.</title>
        <authorList>
            <person name="Braunger K."/>
            <person name="Pfeffer S."/>
            <person name="Shrimal S."/>
            <person name="Gilmore R."/>
            <person name="Berninghausen O."/>
            <person name="Mandon E.C."/>
            <person name="Becker T."/>
            <person name="Foerster F."/>
            <person name="Beckmann R."/>
        </authorList>
    </citation>
    <scope>STRUCTURE BY ELECTRON MICROSCOPY (4.20 ANGSTROMS) OF 30-149</scope>
</reference>
<sequence>METLYRVPFLVLECPNLKLKKPPWVHMPSAMTVYALVVVSYFLITGGIIYDVIVEPPSVGSMTDEHGHQRPVAFLAYRVNGQYIMEGLASSFLFTMGGLGFIILDRSNAPNIPKLNRFLLLFIGFVCVLLSFFMARVFMRMKLPGYLMG</sequence>
<protein>
    <recommendedName>
        <fullName evidence="1">Oligosaccharyltransferase complex subunit OSTC</fullName>
    </recommendedName>
</protein>
<proteinExistence type="evidence at protein level"/>
<feature type="chain" id="PRO_0000370225" description="Oligosaccharyltransferase complex subunit OSTC">
    <location>
        <begin position="1"/>
        <end position="149"/>
    </location>
</feature>
<feature type="topological domain" description="Cytoplasmic" evidence="6">
    <location>
        <begin position="1"/>
        <end position="32"/>
    </location>
</feature>
<feature type="transmembrane region" description="Helical" evidence="5">
    <location>
        <begin position="33"/>
        <end position="53"/>
    </location>
</feature>
<feature type="topological domain" description="Extracellular" evidence="6">
    <location>
        <begin position="54"/>
        <end position="83"/>
    </location>
</feature>
<feature type="transmembrane region" description="Helical" evidence="5">
    <location>
        <begin position="84"/>
        <end position="104"/>
    </location>
</feature>
<feature type="topological domain" description="Cytoplasmic" evidence="6">
    <location>
        <begin position="105"/>
        <end position="117"/>
    </location>
</feature>
<feature type="transmembrane region" description="Helical" evidence="5">
    <location>
        <begin position="118"/>
        <end position="138"/>
    </location>
</feature>
<feature type="topological domain" description="Extracellular" evidence="6">
    <location>
        <begin position="139"/>
        <end position="149"/>
    </location>
</feature>